<name>LTOR3_RAT</name>
<evidence type="ECO:0000250" key="1"/>
<evidence type="ECO:0000250" key="2">
    <source>
        <dbReference type="UniProtKB" id="O88653"/>
    </source>
</evidence>
<evidence type="ECO:0000250" key="3">
    <source>
        <dbReference type="UniProtKB" id="Q9UHA4"/>
    </source>
</evidence>
<evidence type="ECO:0000305" key="4"/>
<dbReference type="EMBL" id="BC086353">
    <property type="protein sequence ID" value="AAH86353.1"/>
    <property type="molecule type" value="mRNA"/>
</dbReference>
<dbReference type="RefSeq" id="NP_001008376.1">
    <property type="nucleotide sequence ID" value="NM_001008375.1"/>
</dbReference>
<dbReference type="RefSeq" id="NP_001416071.1">
    <property type="nucleotide sequence ID" value="NM_001429142.1"/>
</dbReference>
<dbReference type="RefSeq" id="NP_001416072.1">
    <property type="nucleotide sequence ID" value="NM_001429143.1"/>
</dbReference>
<dbReference type="RefSeq" id="XP_006233445.1">
    <property type="nucleotide sequence ID" value="XM_006233383.3"/>
</dbReference>
<dbReference type="RefSeq" id="XP_006233447.1">
    <property type="nucleotide sequence ID" value="XM_006233385.3"/>
</dbReference>
<dbReference type="SMR" id="Q5U204"/>
<dbReference type="FunCoup" id="Q5U204">
    <property type="interactions" value="2721"/>
</dbReference>
<dbReference type="IntAct" id="Q5U204">
    <property type="interactions" value="1"/>
</dbReference>
<dbReference type="STRING" id="10116.ENSRNOP00000014027"/>
<dbReference type="iPTMnet" id="Q5U204"/>
<dbReference type="PhosphoSitePlus" id="Q5U204"/>
<dbReference type="jPOST" id="Q5U204"/>
<dbReference type="PaxDb" id="10116-ENSRNOP00000014027"/>
<dbReference type="GeneID" id="362045"/>
<dbReference type="KEGG" id="rno:362045"/>
<dbReference type="AGR" id="RGD:1307133"/>
<dbReference type="CTD" id="8649"/>
<dbReference type="RGD" id="1307133">
    <property type="gene designation" value="Lamtor3"/>
</dbReference>
<dbReference type="VEuPathDB" id="HostDB:ENSRNOG00000010552"/>
<dbReference type="eggNOG" id="ENOG502RYGZ">
    <property type="taxonomic scope" value="Eukaryota"/>
</dbReference>
<dbReference type="HOGENOM" id="CLU_134641_0_0_1"/>
<dbReference type="InParanoid" id="Q5U204"/>
<dbReference type="OrthoDB" id="17767at9989"/>
<dbReference type="PhylomeDB" id="Q5U204"/>
<dbReference type="TreeFam" id="TF324889"/>
<dbReference type="Reactome" id="R-RNO-1632852">
    <property type="pathway name" value="Macroautophagy"/>
</dbReference>
<dbReference type="Reactome" id="R-RNO-165159">
    <property type="pathway name" value="MTOR signalling"/>
</dbReference>
<dbReference type="Reactome" id="R-RNO-166208">
    <property type="pathway name" value="mTORC1-mediated signalling"/>
</dbReference>
<dbReference type="Reactome" id="R-RNO-380972">
    <property type="pathway name" value="Energy dependent regulation of mTOR by LKB1-AMPK"/>
</dbReference>
<dbReference type="Reactome" id="R-RNO-5628897">
    <property type="pathway name" value="TP53 Regulates Metabolic Genes"/>
</dbReference>
<dbReference type="Reactome" id="R-RNO-5674135">
    <property type="pathway name" value="MAP2K and MAPK activation"/>
</dbReference>
<dbReference type="Reactome" id="R-RNO-6798695">
    <property type="pathway name" value="Neutrophil degranulation"/>
</dbReference>
<dbReference type="Reactome" id="R-RNO-8943724">
    <property type="pathway name" value="Regulation of PTEN gene transcription"/>
</dbReference>
<dbReference type="Reactome" id="R-RNO-9639288">
    <property type="pathway name" value="Amino acids regulate mTORC1"/>
</dbReference>
<dbReference type="PRO" id="PR:Q5U204"/>
<dbReference type="Proteomes" id="UP000002494">
    <property type="component" value="Chromosome 2"/>
</dbReference>
<dbReference type="Bgee" id="ENSRNOG00000010552">
    <property type="expression patterns" value="Expressed in heart and 20 other cell types or tissues"/>
</dbReference>
<dbReference type="GO" id="GO:1990877">
    <property type="term" value="C:FNIP-folliculin RagC/D GAP"/>
    <property type="evidence" value="ECO:0000266"/>
    <property type="project" value="RGD"/>
</dbReference>
<dbReference type="GO" id="GO:0005770">
    <property type="term" value="C:late endosome"/>
    <property type="evidence" value="ECO:0000266"/>
    <property type="project" value="RGD"/>
</dbReference>
<dbReference type="GO" id="GO:0031902">
    <property type="term" value="C:late endosome membrane"/>
    <property type="evidence" value="ECO:0007669"/>
    <property type="project" value="UniProtKB-SubCell"/>
</dbReference>
<dbReference type="GO" id="GO:0005765">
    <property type="term" value="C:lysosomal membrane"/>
    <property type="evidence" value="ECO:0000250"/>
    <property type="project" value="UniProtKB"/>
</dbReference>
<dbReference type="GO" id="GO:0071986">
    <property type="term" value="C:Ragulator complex"/>
    <property type="evidence" value="ECO:0000250"/>
    <property type="project" value="UniProtKB"/>
</dbReference>
<dbReference type="GO" id="GO:0005085">
    <property type="term" value="F:guanyl-nucleotide exchange factor activity"/>
    <property type="evidence" value="ECO:0007669"/>
    <property type="project" value="Ensembl"/>
</dbReference>
<dbReference type="GO" id="GO:0019209">
    <property type="term" value="F:kinase activator activity"/>
    <property type="evidence" value="ECO:0000266"/>
    <property type="project" value="RGD"/>
</dbReference>
<dbReference type="GO" id="GO:0060090">
    <property type="term" value="F:molecular adaptor activity"/>
    <property type="evidence" value="ECO:0007669"/>
    <property type="project" value="Ensembl"/>
</dbReference>
<dbReference type="GO" id="GO:0071230">
    <property type="term" value="P:cellular response to amino acid stimulus"/>
    <property type="evidence" value="ECO:0000250"/>
    <property type="project" value="UniProtKB"/>
</dbReference>
<dbReference type="GO" id="GO:0043410">
    <property type="term" value="P:positive regulation of MAPK cascade"/>
    <property type="evidence" value="ECO:0000266"/>
    <property type="project" value="RGD"/>
</dbReference>
<dbReference type="GO" id="GO:0032008">
    <property type="term" value="P:positive regulation of TOR signaling"/>
    <property type="evidence" value="ECO:0000250"/>
    <property type="project" value="UniProtKB"/>
</dbReference>
<dbReference type="GO" id="GO:1904263">
    <property type="term" value="P:positive regulation of TORC1 signaling"/>
    <property type="evidence" value="ECO:0000250"/>
    <property type="project" value="UniProtKB"/>
</dbReference>
<dbReference type="GO" id="GO:0008104">
    <property type="term" value="P:protein localization"/>
    <property type="evidence" value="ECO:0000250"/>
    <property type="project" value="UniProtKB"/>
</dbReference>
<dbReference type="GO" id="GO:1902414">
    <property type="term" value="P:protein localization to cell junction"/>
    <property type="evidence" value="ECO:0000266"/>
    <property type="project" value="RGD"/>
</dbReference>
<dbReference type="FunFam" id="3.30.450.30:FF:000003">
    <property type="entry name" value="ragulator complex protein LAMTOR3 homolog"/>
    <property type="match status" value="1"/>
</dbReference>
<dbReference type="Gene3D" id="3.30.450.30">
    <property type="entry name" value="Dynein light chain 2a, cytoplasmic"/>
    <property type="match status" value="1"/>
</dbReference>
<dbReference type="InterPro" id="IPR015019">
    <property type="entry name" value="LAMTOR3"/>
</dbReference>
<dbReference type="PANTHER" id="PTHR13378:SF1">
    <property type="entry name" value="RAGULATOR COMPLEX PROTEIN LAMTOR3"/>
    <property type="match status" value="1"/>
</dbReference>
<dbReference type="PANTHER" id="PTHR13378">
    <property type="entry name" value="REGULATOR COMPLEX PROTEIN LAMTOR3"/>
    <property type="match status" value="1"/>
</dbReference>
<dbReference type="Pfam" id="PF08923">
    <property type="entry name" value="MAPKK1_Int"/>
    <property type="match status" value="1"/>
</dbReference>
<dbReference type="SMART" id="SM01278">
    <property type="entry name" value="MAPKK1_Int"/>
    <property type="match status" value="1"/>
</dbReference>
<dbReference type="SUPFAM" id="SSF103196">
    <property type="entry name" value="Roadblock/LC7 domain"/>
    <property type="match status" value="1"/>
</dbReference>
<protein>
    <recommendedName>
        <fullName>Ragulator complex protein LAMTOR3</fullName>
    </recommendedName>
    <alternativeName>
        <fullName>Late endosomal/lysosomal adaptor and MAPK and MTOR activator 3</fullName>
    </alternativeName>
    <alternativeName>
        <fullName>Mitogen-activated protein kinase kinase 1-interacting protein 1</fullName>
    </alternativeName>
</protein>
<keyword id="KW-0967">Endosome</keyword>
<keyword id="KW-0472">Membrane</keyword>
<keyword id="KW-1185">Reference proteome</keyword>
<organism>
    <name type="scientific">Rattus norvegicus</name>
    <name type="common">Rat</name>
    <dbReference type="NCBI Taxonomy" id="10116"/>
    <lineage>
        <taxon>Eukaryota</taxon>
        <taxon>Metazoa</taxon>
        <taxon>Chordata</taxon>
        <taxon>Craniata</taxon>
        <taxon>Vertebrata</taxon>
        <taxon>Euteleostomi</taxon>
        <taxon>Mammalia</taxon>
        <taxon>Eutheria</taxon>
        <taxon>Euarchontoglires</taxon>
        <taxon>Glires</taxon>
        <taxon>Rodentia</taxon>
        <taxon>Myomorpha</taxon>
        <taxon>Muroidea</taxon>
        <taxon>Muridae</taxon>
        <taxon>Murinae</taxon>
        <taxon>Rattus</taxon>
    </lineage>
</organism>
<gene>
    <name type="primary">Lamtor3</name>
    <name type="synonym">Map2k1ip1</name>
</gene>
<comment type="function">
    <text evidence="2 3">As part of the Ragulator complex it is involved in amino acid sensing and activation of mTORC1, a signaling complex promoting cell growth in response to growth factors, energy levels, and amino acids. Activated by amino acids through a mechanism involving the lysosomal V-ATPase, the Ragulator plays a dual role for the small GTPases Rag (RagA/RRAGA, RagB/RRAGB, RagC/RRAGC and/or RagD/RRAGD): it (1) acts as a guanine nucleotide exchange factor (GEF), activating the small GTPases Rag and (2) mediates recruitment of Rag GTPases to the lysosome membrane. Activated Ragulator and Rag GTPases function as a scaffold recruiting mTORC1 to lysosomes where it is in turn activated (By similarity). Adapter protein that enhances the efficiency of the MAP kinase cascade facilitating the activation of MAPK2 (By similarity).</text>
</comment>
<comment type="subunit">
    <text evidence="2 3">Part of the Ragulator complex composed of LAMTOR1, LAMTOR2, LAMTOR3, LAMTOR4 and LAMTOR5. LAMTOR4 and LAMTOR5 form a heterodimer that interacts, through LAMTOR1, with a LAMTOR2, LAMTOR3 heterodimer. Interacts with LAMTOR1 and LAMTOR2; the interaction is direct. The Ragulator complex interacts with both the mTORC1 complex and heterodimers constituted of the Rag GTPases RagA/RRAGA, RagB/RRAGB, RagC/RRAGC and RagD/RRAGD; regulated by amino acid availability. The Ragulator complex interacts with SLC38A9; the probable amino acid sensor. Component of the lysosomal folliculin complex (LFC), composed of FLCN, FNIP1 (or FNIP2), RagA/RRAGA or RagB/RRAGB GDP-bound, RagC/RRAGC or RagD/RRAGD GTP-bound, and Ragulator (By similarity). Interacts with MAP2K1/MEK1 and MAPK2 (By similarity). Interacts with MORG1 (By similarity).</text>
</comment>
<comment type="subcellular location">
    <subcellularLocation>
        <location evidence="2">Late endosome membrane</location>
        <topology evidence="2">Peripheral membrane protein</topology>
        <orientation evidence="2">Cytoplasmic side</orientation>
    </subcellularLocation>
    <text evidence="2">Recruited to lysosome and endosome membranes by LAMTOR1.</text>
</comment>
<comment type="similarity">
    <text evidence="4">Belongs to the LAMTOR3 family.</text>
</comment>
<sequence length="124" mass="13580">MADDLKRFLYKKLPSVEGLHAIVVSDRDGVPVIKVANDSAPEHALRPGFLSTFALATDQGSKLGLSKNKSIICYYNTYQVVQFNRLPLVVSFIASSNANTGLIVSLEKELAPLFEELIKVVEVS</sequence>
<reference key="1">
    <citation type="journal article" date="2004" name="Genome Res.">
        <title>The status, quality, and expansion of the NIH full-length cDNA project: the Mammalian Gene Collection (MGC).</title>
        <authorList>
            <consortium name="The MGC Project Team"/>
        </authorList>
    </citation>
    <scope>NUCLEOTIDE SEQUENCE [LARGE SCALE MRNA]</scope>
    <source>
        <tissue>Ovary</tissue>
    </source>
</reference>
<proteinExistence type="evidence at transcript level"/>
<feature type="chain" id="PRO_0000240658" description="Ragulator complex protein LAMTOR3">
    <location>
        <begin position="1"/>
        <end position="124"/>
    </location>
</feature>
<feature type="region of interest" description="Required for interaction with LAMTOR2" evidence="1">
    <location>
        <begin position="57"/>
        <end position="70"/>
    </location>
</feature>
<accession>Q5U204</accession>